<keyword id="KW-0227">DNA damage</keyword>
<keyword id="KW-0234">DNA repair</keyword>
<keyword id="KW-0235">DNA replication</keyword>
<keyword id="KW-0436">Ligase</keyword>
<keyword id="KW-0460">Magnesium</keyword>
<keyword id="KW-0464">Manganese</keyword>
<keyword id="KW-0479">Metal-binding</keyword>
<keyword id="KW-0520">NAD</keyword>
<keyword id="KW-1185">Reference proteome</keyword>
<keyword id="KW-0862">Zinc</keyword>
<reference key="1">
    <citation type="journal article" date="2009" name="Proc. Natl. Acad. Sci. U.S.A.">
        <title>The genomic basis of trophic strategy in marine bacteria.</title>
        <authorList>
            <person name="Lauro F.M."/>
            <person name="McDougald D."/>
            <person name="Thomas T."/>
            <person name="Williams T.J."/>
            <person name="Egan S."/>
            <person name="Rice S."/>
            <person name="DeMaere M.Z."/>
            <person name="Ting L."/>
            <person name="Ertan H."/>
            <person name="Johnson J."/>
            <person name="Ferriera S."/>
            <person name="Lapidus A."/>
            <person name="Anderson I."/>
            <person name="Kyrpides N."/>
            <person name="Munk A.C."/>
            <person name="Detter C."/>
            <person name="Han C.S."/>
            <person name="Brown M.V."/>
            <person name="Robb F.T."/>
            <person name="Kjelleberg S."/>
            <person name="Cavicchioli R."/>
        </authorList>
    </citation>
    <scope>NUCLEOTIDE SEQUENCE [LARGE SCALE GENOMIC DNA]</scope>
    <source>
        <strain>DSM 13593 / LMG 18877 / RB2256</strain>
    </source>
</reference>
<accession>Q1GVQ2</accession>
<name>DNLJ_SPHAL</name>
<protein>
    <recommendedName>
        <fullName evidence="1">DNA ligase</fullName>
        <ecNumber evidence="1">6.5.1.2</ecNumber>
    </recommendedName>
    <alternativeName>
        <fullName evidence="1">Polydeoxyribonucleotide synthase [NAD(+)]</fullName>
    </alternativeName>
</protein>
<comment type="function">
    <text evidence="1">DNA ligase that catalyzes the formation of phosphodiester linkages between 5'-phosphoryl and 3'-hydroxyl groups in double-stranded DNA using NAD as a coenzyme and as the energy source for the reaction. It is essential for DNA replication and repair of damaged DNA.</text>
</comment>
<comment type="catalytic activity">
    <reaction evidence="1">
        <text>NAD(+) + (deoxyribonucleotide)n-3'-hydroxyl + 5'-phospho-(deoxyribonucleotide)m = (deoxyribonucleotide)n+m + AMP + beta-nicotinamide D-nucleotide.</text>
        <dbReference type="EC" id="6.5.1.2"/>
    </reaction>
</comment>
<comment type="cofactor">
    <cofactor evidence="1">
        <name>Mg(2+)</name>
        <dbReference type="ChEBI" id="CHEBI:18420"/>
    </cofactor>
    <cofactor evidence="1">
        <name>Mn(2+)</name>
        <dbReference type="ChEBI" id="CHEBI:29035"/>
    </cofactor>
</comment>
<comment type="similarity">
    <text evidence="1">Belongs to the NAD-dependent DNA ligase family. LigA subfamily.</text>
</comment>
<gene>
    <name evidence="1" type="primary">ligA</name>
    <name type="ordered locus">Sala_0549</name>
</gene>
<feature type="chain" id="PRO_0000313444" description="DNA ligase">
    <location>
        <begin position="1"/>
        <end position="714"/>
    </location>
</feature>
<feature type="domain" description="BRCT" evidence="1">
    <location>
        <begin position="634"/>
        <end position="714"/>
    </location>
</feature>
<feature type="active site" description="N6-AMP-lysine intermediate" evidence="1">
    <location>
        <position position="126"/>
    </location>
</feature>
<feature type="binding site" evidence="1">
    <location>
        <begin position="40"/>
        <end position="44"/>
    </location>
    <ligand>
        <name>NAD(+)</name>
        <dbReference type="ChEBI" id="CHEBI:57540"/>
    </ligand>
</feature>
<feature type="binding site" evidence="1">
    <location>
        <begin position="90"/>
        <end position="91"/>
    </location>
    <ligand>
        <name>NAD(+)</name>
        <dbReference type="ChEBI" id="CHEBI:57540"/>
    </ligand>
</feature>
<feature type="binding site" evidence="1">
    <location>
        <position position="124"/>
    </location>
    <ligand>
        <name>NAD(+)</name>
        <dbReference type="ChEBI" id="CHEBI:57540"/>
    </ligand>
</feature>
<feature type="binding site" evidence="1">
    <location>
        <position position="147"/>
    </location>
    <ligand>
        <name>NAD(+)</name>
        <dbReference type="ChEBI" id="CHEBI:57540"/>
    </ligand>
</feature>
<feature type="binding site" evidence="1">
    <location>
        <position position="183"/>
    </location>
    <ligand>
        <name>NAD(+)</name>
        <dbReference type="ChEBI" id="CHEBI:57540"/>
    </ligand>
</feature>
<feature type="binding site" evidence="1">
    <location>
        <position position="304"/>
    </location>
    <ligand>
        <name>NAD(+)</name>
        <dbReference type="ChEBI" id="CHEBI:57540"/>
    </ligand>
</feature>
<feature type="binding site" evidence="1">
    <location>
        <position position="328"/>
    </location>
    <ligand>
        <name>NAD(+)</name>
        <dbReference type="ChEBI" id="CHEBI:57540"/>
    </ligand>
</feature>
<feature type="binding site" evidence="1">
    <location>
        <position position="420"/>
    </location>
    <ligand>
        <name>Zn(2+)</name>
        <dbReference type="ChEBI" id="CHEBI:29105"/>
    </ligand>
</feature>
<feature type="binding site" evidence="1">
    <location>
        <position position="423"/>
    </location>
    <ligand>
        <name>Zn(2+)</name>
        <dbReference type="ChEBI" id="CHEBI:29105"/>
    </ligand>
</feature>
<feature type="binding site" evidence="1">
    <location>
        <position position="438"/>
    </location>
    <ligand>
        <name>Zn(2+)</name>
        <dbReference type="ChEBI" id="CHEBI:29105"/>
    </ligand>
</feature>
<feature type="binding site" evidence="1">
    <location>
        <position position="444"/>
    </location>
    <ligand>
        <name>Zn(2+)</name>
        <dbReference type="ChEBI" id="CHEBI:29105"/>
    </ligand>
</feature>
<dbReference type="EC" id="6.5.1.2" evidence="1"/>
<dbReference type="EMBL" id="CP000356">
    <property type="protein sequence ID" value="ABF52270.1"/>
    <property type="molecule type" value="Genomic_DNA"/>
</dbReference>
<dbReference type="RefSeq" id="WP_011540861.1">
    <property type="nucleotide sequence ID" value="NC_008048.1"/>
</dbReference>
<dbReference type="SMR" id="Q1GVQ2"/>
<dbReference type="STRING" id="317655.Sala_0549"/>
<dbReference type="KEGG" id="sal:Sala_0549"/>
<dbReference type="eggNOG" id="COG0272">
    <property type="taxonomic scope" value="Bacteria"/>
</dbReference>
<dbReference type="HOGENOM" id="CLU_007764_2_1_5"/>
<dbReference type="OrthoDB" id="9759736at2"/>
<dbReference type="Proteomes" id="UP000006578">
    <property type="component" value="Chromosome"/>
</dbReference>
<dbReference type="GO" id="GO:0005829">
    <property type="term" value="C:cytosol"/>
    <property type="evidence" value="ECO:0007669"/>
    <property type="project" value="TreeGrafter"/>
</dbReference>
<dbReference type="GO" id="GO:0003911">
    <property type="term" value="F:DNA ligase (NAD+) activity"/>
    <property type="evidence" value="ECO:0007669"/>
    <property type="project" value="UniProtKB-UniRule"/>
</dbReference>
<dbReference type="GO" id="GO:0046872">
    <property type="term" value="F:metal ion binding"/>
    <property type="evidence" value="ECO:0007669"/>
    <property type="project" value="UniProtKB-KW"/>
</dbReference>
<dbReference type="GO" id="GO:0006281">
    <property type="term" value="P:DNA repair"/>
    <property type="evidence" value="ECO:0007669"/>
    <property type="project" value="UniProtKB-KW"/>
</dbReference>
<dbReference type="GO" id="GO:0006260">
    <property type="term" value="P:DNA replication"/>
    <property type="evidence" value="ECO:0007669"/>
    <property type="project" value="UniProtKB-KW"/>
</dbReference>
<dbReference type="CDD" id="cd17748">
    <property type="entry name" value="BRCT_DNA_ligase_like"/>
    <property type="match status" value="1"/>
</dbReference>
<dbReference type="CDD" id="cd00114">
    <property type="entry name" value="LIGANc"/>
    <property type="match status" value="1"/>
</dbReference>
<dbReference type="FunFam" id="3.30.470.30:FF:000001">
    <property type="entry name" value="DNA ligase"/>
    <property type="match status" value="1"/>
</dbReference>
<dbReference type="Gene3D" id="6.20.10.30">
    <property type="match status" value="1"/>
</dbReference>
<dbReference type="Gene3D" id="1.10.150.20">
    <property type="entry name" value="5' to 3' exonuclease, C-terminal subdomain"/>
    <property type="match status" value="2"/>
</dbReference>
<dbReference type="Gene3D" id="3.40.50.10190">
    <property type="entry name" value="BRCT domain"/>
    <property type="match status" value="1"/>
</dbReference>
<dbReference type="Gene3D" id="3.30.470.30">
    <property type="entry name" value="DNA ligase/mRNA capping enzyme"/>
    <property type="match status" value="1"/>
</dbReference>
<dbReference type="Gene3D" id="1.10.287.610">
    <property type="entry name" value="Helix hairpin bin"/>
    <property type="match status" value="1"/>
</dbReference>
<dbReference type="Gene3D" id="2.40.50.140">
    <property type="entry name" value="Nucleic acid-binding proteins"/>
    <property type="match status" value="1"/>
</dbReference>
<dbReference type="HAMAP" id="MF_01588">
    <property type="entry name" value="DNA_ligase_A"/>
    <property type="match status" value="1"/>
</dbReference>
<dbReference type="InterPro" id="IPR001357">
    <property type="entry name" value="BRCT_dom"/>
</dbReference>
<dbReference type="InterPro" id="IPR036420">
    <property type="entry name" value="BRCT_dom_sf"/>
</dbReference>
<dbReference type="InterPro" id="IPR001679">
    <property type="entry name" value="DNA_ligase"/>
</dbReference>
<dbReference type="InterPro" id="IPR018239">
    <property type="entry name" value="DNA_ligase_AS"/>
</dbReference>
<dbReference type="InterPro" id="IPR033136">
    <property type="entry name" value="DNA_ligase_CS"/>
</dbReference>
<dbReference type="InterPro" id="IPR013839">
    <property type="entry name" value="DNAligase_adenylation"/>
</dbReference>
<dbReference type="InterPro" id="IPR013840">
    <property type="entry name" value="DNAligase_N"/>
</dbReference>
<dbReference type="InterPro" id="IPR012340">
    <property type="entry name" value="NA-bd_OB-fold"/>
</dbReference>
<dbReference type="InterPro" id="IPR004150">
    <property type="entry name" value="NAD_DNA_ligase_OB"/>
</dbReference>
<dbReference type="InterPro" id="IPR010994">
    <property type="entry name" value="RuvA_2-like"/>
</dbReference>
<dbReference type="InterPro" id="IPR004149">
    <property type="entry name" value="Znf_DNAligase_C4"/>
</dbReference>
<dbReference type="NCBIfam" id="TIGR00575">
    <property type="entry name" value="dnlj"/>
    <property type="match status" value="1"/>
</dbReference>
<dbReference type="NCBIfam" id="NF005932">
    <property type="entry name" value="PRK07956.1"/>
    <property type="match status" value="1"/>
</dbReference>
<dbReference type="PANTHER" id="PTHR23389">
    <property type="entry name" value="CHROMOSOME TRANSMISSION FIDELITY FACTOR 18"/>
    <property type="match status" value="1"/>
</dbReference>
<dbReference type="PANTHER" id="PTHR23389:SF9">
    <property type="entry name" value="DNA LIGASE"/>
    <property type="match status" value="1"/>
</dbReference>
<dbReference type="Pfam" id="PF00533">
    <property type="entry name" value="BRCT"/>
    <property type="match status" value="1"/>
</dbReference>
<dbReference type="Pfam" id="PF01653">
    <property type="entry name" value="DNA_ligase_aden"/>
    <property type="match status" value="1"/>
</dbReference>
<dbReference type="Pfam" id="PF03120">
    <property type="entry name" value="DNA_ligase_OB"/>
    <property type="match status" value="1"/>
</dbReference>
<dbReference type="Pfam" id="PF03119">
    <property type="entry name" value="DNA_ligase_ZBD"/>
    <property type="match status" value="1"/>
</dbReference>
<dbReference type="PIRSF" id="PIRSF001604">
    <property type="entry name" value="LigA"/>
    <property type="match status" value="1"/>
</dbReference>
<dbReference type="SMART" id="SM00292">
    <property type="entry name" value="BRCT"/>
    <property type="match status" value="1"/>
</dbReference>
<dbReference type="SMART" id="SM00532">
    <property type="entry name" value="LIGANc"/>
    <property type="match status" value="1"/>
</dbReference>
<dbReference type="SUPFAM" id="SSF52113">
    <property type="entry name" value="BRCT domain"/>
    <property type="match status" value="1"/>
</dbReference>
<dbReference type="SUPFAM" id="SSF56091">
    <property type="entry name" value="DNA ligase/mRNA capping enzyme, catalytic domain"/>
    <property type="match status" value="1"/>
</dbReference>
<dbReference type="SUPFAM" id="SSF50249">
    <property type="entry name" value="Nucleic acid-binding proteins"/>
    <property type="match status" value="1"/>
</dbReference>
<dbReference type="SUPFAM" id="SSF47781">
    <property type="entry name" value="RuvA domain 2-like"/>
    <property type="match status" value="1"/>
</dbReference>
<dbReference type="PROSITE" id="PS50172">
    <property type="entry name" value="BRCT"/>
    <property type="match status" value="1"/>
</dbReference>
<dbReference type="PROSITE" id="PS01055">
    <property type="entry name" value="DNA_LIGASE_N1"/>
    <property type="match status" value="1"/>
</dbReference>
<dbReference type="PROSITE" id="PS01056">
    <property type="entry name" value="DNA_LIGASE_N2"/>
    <property type="match status" value="1"/>
</dbReference>
<evidence type="ECO:0000255" key="1">
    <source>
        <dbReference type="HAMAP-Rule" id="MF_01588"/>
    </source>
</evidence>
<proteinExistence type="inferred from homology"/>
<sequence>MKDVGSLTEAEAANELMRLAKQIAHHNKLYHAEDSPEISDADYDALVRRNTAIEEAFPHLIRADSPNRLVGAAVEASPLAKVTHAQRMMSLDNAFAAEDVEEFAARVRRFLNLDEGEPLAFTAEDKIDGLSCSLRYEKGVLVQAATRGDGTVGEDVTPNVRTIADIPQNLKGDIPDIFEIRGEVYMAKADFAALNARLLAEADDPDKARQFANPRNAAAGSLRQKDASVTASRPLRFLAHGWGEVSALPADTQYAVMKAIESWGVPVSPLLKRCDGVADLLDHYRMIEAERAELPYDIDGVVYKVDRLDWQARLGFVARAPRWAIAHKFPAERAQTTLEAIDIQVGRTGKLTPVGRLTPVTVGGVVVSNVTLHNRDEIARLGVRPGDRIIVQRAGDVIPQVVENLTRDEPREPYVFPDHCPVCGSEAVAEDGEVDVRCTGGLICNAQKFERLRHFVSRGALDIEGLGEKSIAEFLELGWLEKGPADIFRLKSHREELLAREGWKERSVDNLLAAIEAKRQPDAARLLFGLGIRHVGAVTARDLLKGIGDIARLPGKAAELRAWVEANPRIEGESEGKYAARRLEAIKAILDVRADGIGPAVAEALGDFFHEPHNRVLWDDLLSEVSPPPYVVETRDSEVSGKTVVFTGKLETMSRDEAKAQAEALGAKAAGSVSAKTDLVVAGPGAGSKLKQAASLGIRVIDEAEWAAIVAAAG</sequence>
<organism>
    <name type="scientific">Sphingopyxis alaskensis (strain DSM 13593 / LMG 18877 / RB2256)</name>
    <name type="common">Sphingomonas alaskensis</name>
    <dbReference type="NCBI Taxonomy" id="317655"/>
    <lineage>
        <taxon>Bacteria</taxon>
        <taxon>Pseudomonadati</taxon>
        <taxon>Pseudomonadota</taxon>
        <taxon>Alphaproteobacteria</taxon>
        <taxon>Sphingomonadales</taxon>
        <taxon>Sphingomonadaceae</taxon>
        <taxon>Sphingopyxis</taxon>
    </lineage>
</organism>